<gene>
    <name evidence="1" type="primary">ihfA</name>
    <name evidence="1" type="synonym">himA</name>
    <name type="ordered locus">Nham_1587</name>
</gene>
<reference key="1">
    <citation type="submission" date="2006-03" db="EMBL/GenBank/DDBJ databases">
        <title>Complete sequence of chromosome of Nitrobacter hamburgensis X14.</title>
        <authorList>
            <consortium name="US DOE Joint Genome Institute"/>
            <person name="Copeland A."/>
            <person name="Lucas S."/>
            <person name="Lapidus A."/>
            <person name="Barry K."/>
            <person name="Detter J.C."/>
            <person name="Glavina del Rio T."/>
            <person name="Hammon N."/>
            <person name="Israni S."/>
            <person name="Dalin E."/>
            <person name="Tice H."/>
            <person name="Pitluck S."/>
            <person name="Chain P."/>
            <person name="Malfatti S."/>
            <person name="Shin M."/>
            <person name="Vergez L."/>
            <person name="Schmutz J."/>
            <person name="Larimer F."/>
            <person name="Land M."/>
            <person name="Hauser L."/>
            <person name="Kyrpides N."/>
            <person name="Ivanova N."/>
            <person name="Ward B."/>
            <person name="Arp D."/>
            <person name="Klotz M."/>
            <person name="Stein L."/>
            <person name="O'Mullan G."/>
            <person name="Starkenburg S."/>
            <person name="Sayavedra L."/>
            <person name="Poret-Peterson A.T."/>
            <person name="Gentry M.E."/>
            <person name="Bruce D."/>
            <person name="Richardson P."/>
        </authorList>
    </citation>
    <scope>NUCLEOTIDE SEQUENCE [LARGE SCALE GENOMIC DNA]</scope>
    <source>
        <strain>DSM 10229 / NCIMB 13809 / X14</strain>
    </source>
</reference>
<comment type="function">
    <text evidence="1">This protein is one of the two subunits of integration host factor, a specific DNA-binding protein that functions in genetic recombination as well as in transcriptional and translational control.</text>
</comment>
<comment type="subunit">
    <text evidence="1">Heterodimer of an alpha and a beta chain.</text>
</comment>
<comment type="similarity">
    <text evidence="1">Belongs to the bacterial histone-like protein family.</text>
</comment>
<feature type="chain" id="PRO_1000060550" description="Integration host factor subunit alpha">
    <location>
        <begin position="1"/>
        <end position="110"/>
    </location>
</feature>
<dbReference type="EMBL" id="CP000319">
    <property type="protein sequence ID" value="ABE62408.1"/>
    <property type="molecule type" value="Genomic_DNA"/>
</dbReference>
<dbReference type="RefSeq" id="WP_011510094.1">
    <property type="nucleotide sequence ID" value="NC_007964.1"/>
</dbReference>
<dbReference type="SMR" id="Q1QMY9"/>
<dbReference type="STRING" id="323097.Nham_1587"/>
<dbReference type="KEGG" id="nha:Nham_1587"/>
<dbReference type="eggNOG" id="COG0776">
    <property type="taxonomic scope" value="Bacteria"/>
</dbReference>
<dbReference type="HOGENOM" id="CLU_105066_1_1_5"/>
<dbReference type="OrthoDB" id="9797747at2"/>
<dbReference type="Proteomes" id="UP000001953">
    <property type="component" value="Chromosome"/>
</dbReference>
<dbReference type="GO" id="GO:0005829">
    <property type="term" value="C:cytosol"/>
    <property type="evidence" value="ECO:0007669"/>
    <property type="project" value="TreeGrafter"/>
</dbReference>
<dbReference type="GO" id="GO:0003677">
    <property type="term" value="F:DNA binding"/>
    <property type="evidence" value="ECO:0007669"/>
    <property type="project" value="UniProtKB-UniRule"/>
</dbReference>
<dbReference type="GO" id="GO:0030527">
    <property type="term" value="F:structural constituent of chromatin"/>
    <property type="evidence" value="ECO:0007669"/>
    <property type="project" value="InterPro"/>
</dbReference>
<dbReference type="GO" id="GO:0006310">
    <property type="term" value="P:DNA recombination"/>
    <property type="evidence" value="ECO:0007669"/>
    <property type="project" value="UniProtKB-UniRule"/>
</dbReference>
<dbReference type="GO" id="GO:0009893">
    <property type="term" value="P:positive regulation of metabolic process"/>
    <property type="evidence" value="ECO:0007669"/>
    <property type="project" value="UniProtKB-ARBA"/>
</dbReference>
<dbReference type="GO" id="GO:0006355">
    <property type="term" value="P:regulation of DNA-templated transcription"/>
    <property type="evidence" value="ECO:0007669"/>
    <property type="project" value="UniProtKB-UniRule"/>
</dbReference>
<dbReference type="GO" id="GO:0006417">
    <property type="term" value="P:regulation of translation"/>
    <property type="evidence" value="ECO:0007669"/>
    <property type="project" value="UniProtKB-UniRule"/>
</dbReference>
<dbReference type="CDD" id="cd13835">
    <property type="entry name" value="IHF_A"/>
    <property type="match status" value="1"/>
</dbReference>
<dbReference type="FunFam" id="4.10.520.10:FF:000010">
    <property type="entry name" value="Integration host factor subunit alpha"/>
    <property type="match status" value="1"/>
</dbReference>
<dbReference type="Gene3D" id="4.10.520.10">
    <property type="entry name" value="IHF-like DNA-binding proteins"/>
    <property type="match status" value="1"/>
</dbReference>
<dbReference type="HAMAP" id="MF_00380">
    <property type="entry name" value="IHF_alpha"/>
    <property type="match status" value="1"/>
</dbReference>
<dbReference type="InterPro" id="IPR000119">
    <property type="entry name" value="Hist_DNA-bd"/>
</dbReference>
<dbReference type="InterPro" id="IPR020816">
    <property type="entry name" value="Histone-like_DNA-bd_CS"/>
</dbReference>
<dbReference type="InterPro" id="IPR010992">
    <property type="entry name" value="IHF-like_DNA-bd_dom_sf"/>
</dbReference>
<dbReference type="InterPro" id="IPR005684">
    <property type="entry name" value="IHF_alpha"/>
</dbReference>
<dbReference type="NCBIfam" id="TIGR00987">
    <property type="entry name" value="himA"/>
    <property type="match status" value="1"/>
</dbReference>
<dbReference type="NCBIfam" id="NF001401">
    <property type="entry name" value="PRK00285.1"/>
    <property type="match status" value="1"/>
</dbReference>
<dbReference type="PANTHER" id="PTHR33175">
    <property type="entry name" value="DNA-BINDING PROTEIN HU"/>
    <property type="match status" value="1"/>
</dbReference>
<dbReference type="PANTHER" id="PTHR33175:SF2">
    <property type="entry name" value="INTEGRATION HOST FACTOR SUBUNIT ALPHA"/>
    <property type="match status" value="1"/>
</dbReference>
<dbReference type="Pfam" id="PF00216">
    <property type="entry name" value="Bac_DNA_binding"/>
    <property type="match status" value="1"/>
</dbReference>
<dbReference type="PRINTS" id="PR01727">
    <property type="entry name" value="DNABINDINGHU"/>
</dbReference>
<dbReference type="SMART" id="SM00411">
    <property type="entry name" value="BHL"/>
    <property type="match status" value="1"/>
</dbReference>
<dbReference type="SUPFAM" id="SSF47729">
    <property type="entry name" value="IHF-like DNA-binding proteins"/>
    <property type="match status" value="1"/>
</dbReference>
<dbReference type="PROSITE" id="PS00045">
    <property type="entry name" value="HISTONE_LIKE"/>
    <property type="match status" value="1"/>
</dbReference>
<protein>
    <recommendedName>
        <fullName evidence="1">Integration host factor subunit alpha</fullName>
        <shortName evidence="1">IHF-alpha</shortName>
    </recommendedName>
</protein>
<evidence type="ECO:0000255" key="1">
    <source>
        <dbReference type="HAMAP-Rule" id="MF_00380"/>
    </source>
</evidence>
<name>IHFA_NITHX</name>
<accession>Q1QMY9</accession>
<organism>
    <name type="scientific">Nitrobacter hamburgensis (strain DSM 10229 / NCIMB 13809 / X14)</name>
    <dbReference type="NCBI Taxonomy" id="323097"/>
    <lineage>
        <taxon>Bacteria</taxon>
        <taxon>Pseudomonadati</taxon>
        <taxon>Pseudomonadota</taxon>
        <taxon>Alphaproteobacteria</taxon>
        <taxon>Hyphomicrobiales</taxon>
        <taxon>Nitrobacteraceae</taxon>
        <taxon>Nitrobacter</taxon>
    </lineage>
</organism>
<sequence length="110" mass="11949">MTGSGKTVTRVDLCEAVYKKVGLSRTESSAFVELVLKEITDCLEKGETVKLSSFGSFMVRKKGQRIGRNPKTGTEVPISPRRVMVFKPSAILKQRINGNSNGNGADTKAD</sequence>
<keyword id="KW-0233">DNA recombination</keyword>
<keyword id="KW-0238">DNA-binding</keyword>
<keyword id="KW-1185">Reference proteome</keyword>
<keyword id="KW-0804">Transcription</keyword>
<keyword id="KW-0805">Transcription regulation</keyword>
<keyword id="KW-0810">Translation regulation</keyword>
<proteinExistence type="inferred from homology"/>